<sequence length="80" mass="9202">MSNTKTLEDNISFEEALRELEEIVKKIDNGQESLETAVNSFERGILLKNYCEKKLKEARLKIEKITKLADSTVILEETEV</sequence>
<comment type="function">
    <text evidence="1">Bidirectionally degrades single-stranded DNA into large acid-insoluble oligonucleotides, which are then degraded further into small acid-soluble oligonucleotides.</text>
</comment>
<comment type="catalytic activity">
    <reaction evidence="1">
        <text>Exonucleolytic cleavage in either 5'- to 3'- or 3'- to 5'-direction to yield nucleoside 5'-phosphates.</text>
        <dbReference type="EC" id="3.1.11.6"/>
    </reaction>
</comment>
<comment type="subunit">
    <text evidence="1">Heterooligomer composed of large and small subunits.</text>
</comment>
<comment type="subcellular location">
    <subcellularLocation>
        <location evidence="1">Cytoplasm</location>
    </subcellularLocation>
</comment>
<comment type="similarity">
    <text evidence="1">Belongs to the XseB family.</text>
</comment>
<proteinExistence type="inferred from homology"/>
<organism>
    <name type="scientific">Rickettsia typhi (strain ATCC VR-144 / Wilmington)</name>
    <dbReference type="NCBI Taxonomy" id="257363"/>
    <lineage>
        <taxon>Bacteria</taxon>
        <taxon>Pseudomonadati</taxon>
        <taxon>Pseudomonadota</taxon>
        <taxon>Alphaproteobacteria</taxon>
        <taxon>Rickettsiales</taxon>
        <taxon>Rickettsiaceae</taxon>
        <taxon>Rickettsieae</taxon>
        <taxon>Rickettsia</taxon>
        <taxon>typhus group</taxon>
    </lineage>
</organism>
<dbReference type="EC" id="3.1.11.6" evidence="1"/>
<dbReference type="EMBL" id="AE017197">
    <property type="protein sequence ID" value="AAU03819.1"/>
    <property type="molecule type" value="Genomic_DNA"/>
</dbReference>
<dbReference type="RefSeq" id="WP_011190803.1">
    <property type="nucleotide sequence ID" value="NC_006142.1"/>
</dbReference>
<dbReference type="SMR" id="Q68X23"/>
<dbReference type="KEGG" id="rty:RT0339"/>
<dbReference type="eggNOG" id="COG1722">
    <property type="taxonomic scope" value="Bacteria"/>
</dbReference>
<dbReference type="HOGENOM" id="CLU_145918_0_3_5"/>
<dbReference type="OrthoDB" id="9808145at2"/>
<dbReference type="Proteomes" id="UP000000604">
    <property type="component" value="Chromosome"/>
</dbReference>
<dbReference type="GO" id="GO:0005829">
    <property type="term" value="C:cytosol"/>
    <property type="evidence" value="ECO:0007669"/>
    <property type="project" value="TreeGrafter"/>
</dbReference>
<dbReference type="GO" id="GO:0009318">
    <property type="term" value="C:exodeoxyribonuclease VII complex"/>
    <property type="evidence" value="ECO:0007669"/>
    <property type="project" value="InterPro"/>
</dbReference>
<dbReference type="GO" id="GO:0008855">
    <property type="term" value="F:exodeoxyribonuclease VII activity"/>
    <property type="evidence" value="ECO:0007669"/>
    <property type="project" value="UniProtKB-UniRule"/>
</dbReference>
<dbReference type="GO" id="GO:0006308">
    <property type="term" value="P:DNA catabolic process"/>
    <property type="evidence" value="ECO:0007669"/>
    <property type="project" value="UniProtKB-UniRule"/>
</dbReference>
<dbReference type="Gene3D" id="1.10.287.1040">
    <property type="entry name" value="Exonuclease VII, small subunit"/>
    <property type="match status" value="1"/>
</dbReference>
<dbReference type="HAMAP" id="MF_00337">
    <property type="entry name" value="Exonuc_7_S"/>
    <property type="match status" value="1"/>
</dbReference>
<dbReference type="InterPro" id="IPR003761">
    <property type="entry name" value="Exonuc_VII_S"/>
</dbReference>
<dbReference type="InterPro" id="IPR037004">
    <property type="entry name" value="Exonuc_VII_ssu_sf"/>
</dbReference>
<dbReference type="NCBIfam" id="NF002140">
    <property type="entry name" value="PRK00977.1-4"/>
    <property type="match status" value="1"/>
</dbReference>
<dbReference type="NCBIfam" id="TIGR01280">
    <property type="entry name" value="xseB"/>
    <property type="match status" value="1"/>
</dbReference>
<dbReference type="PANTHER" id="PTHR34137">
    <property type="entry name" value="EXODEOXYRIBONUCLEASE 7 SMALL SUBUNIT"/>
    <property type="match status" value="1"/>
</dbReference>
<dbReference type="PANTHER" id="PTHR34137:SF1">
    <property type="entry name" value="EXODEOXYRIBONUCLEASE 7 SMALL SUBUNIT"/>
    <property type="match status" value="1"/>
</dbReference>
<dbReference type="Pfam" id="PF02609">
    <property type="entry name" value="Exonuc_VII_S"/>
    <property type="match status" value="1"/>
</dbReference>
<dbReference type="PIRSF" id="PIRSF006488">
    <property type="entry name" value="Exonuc_VII_S"/>
    <property type="match status" value="1"/>
</dbReference>
<dbReference type="SUPFAM" id="SSF116842">
    <property type="entry name" value="XseB-like"/>
    <property type="match status" value="1"/>
</dbReference>
<evidence type="ECO:0000255" key="1">
    <source>
        <dbReference type="HAMAP-Rule" id="MF_00337"/>
    </source>
</evidence>
<feature type="chain" id="PRO_0000206997" description="Exodeoxyribonuclease 7 small subunit">
    <location>
        <begin position="1"/>
        <end position="80"/>
    </location>
</feature>
<accession>Q68X23</accession>
<gene>
    <name evidence="1" type="primary">xseB</name>
    <name type="ordered locus">RT0339</name>
</gene>
<reference key="1">
    <citation type="journal article" date="2004" name="J. Bacteriol.">
        <title>Complete genome sequence of Rickettsia typhi and comparison with sequences of other Rickettsiae.</title>
        <authorList>
            <person name="McLeod M.P."/>
            <person name="Qin X."/>
            <person name="Karpathy S.E."/>
            <person name="Gioia J."/>
            <person name="Highlander S.K."/>
            <person name="Fox G.E."/>
            <person name="McNeill T.Z."/>
            <person name="Jiang H."/>
            <person name="Muzny D."/>
            <person name="Jacob L.S."/>
            <person name="Hawes A.C."/>
            <person name="Sodergren E."/>
            <person name="Gill R."/>
            <person name="Hume J."/>
            <person name="Morgan M."/>
            <person name="Fan G."/>
            <person name="Amin A.G."/>
            <person name="Gibbs R.A."/>
            <person name="Hong C."/>
            <person name="Yu X.-J."/>
            <person name="Walker D.H."/>
            <person name="Weinstock G.M."/>
        </authorList>
    </citation>
    <scope>NUCLEOTIDE SEQUENCE [LARGE SCALE GENOMIC DNA]</scope>
    <source>
        <strain>ATCC VR-144 / Wilmington</strain>
    </source>
</reference>
<keyword id="KW-0963">Cytoplasm</keyword>
<keyword id="KW-0269">Exonuclease</keyword>
<keyword id="KW-0378">Hydrolase</keyword>
<keyword id="KW-0540">Nuclease</keyword>
<protein>
    <recommendedName>
        <fullName evidence="1">Exodeoxyribonuclease 7 small subunit</fullName>
        <ecNumber evidence="1">3.1.11.6</ecNumber>
    </recommendedName>
    <alternativeName>
        <fullName evidence="1">Exodeoxyribonuclease VII small subunit</fullName>
        <shortName evidence="1">Exonuclease VII small subunit</shortName>
    </alternativeName>
</protein>
<name>EX7S_RICTY</name>